<comment type="function">
    <text evidence="1">Part of the MsrPQ system that repairs oxidized periplasmic proteins containing methionine sulfoxide residues (Met-O), using respiratory chain electrons. Thus protects these proteins from oxidative-stress damage caused by reactive species of oxygen and chlorine generated by the host defense mechanisms. MsrPQ is essential for the maintenance of envelope integrity under bleach stress, rescuing a wide series of structurally unrelated periplasmic proteins from methionine oxidation, including the primary periplasmic chaperone SurA and the lipoprotein Pal. The catalytic subunit MsrP is non-stereospecific, being able to reduce both (R-) and (S-) diastereoisomers of methionine sulfoxide.</text>
</comment>
<comment type="catalytic activity">
    <reaction evidence="1">
        <text>L-methionyl-[protein] + a quinone + H2O = L-methionyl-(S)-S-oxide-[protein] + a quinol</text>
        <dbReference type="Rhea" id="RHEA:51292"/>
        <dbReference type="Rhea" id="RHEA-COMP:12313"/>
        <dbReference type="Rhea" id="RHEA-COMP:12315"/>
        <dbReference type="ChEBI" id="CHEBI:15377"/>
        <dbReference type="ChEBI" id="CHEBI:16044"/>
        <dbReference type="ChEBI" id="CHEBI:24646"/>
        <dbReference type="ChEBI" id="CHEBI:44120"/>
        <dbReference type="ChEBI" id="CHEBI:132124"/>
    </reaction>
</comment>
<comment type="catalytic activity">
    <reaction evidence="1">
        <text>L-methionyl-[protein] + a quinone + H2O = L-methionyl-(R)-S-oxide-[protein] + a quinol</text>
        <dbReference type="Rhea" id="RHEA:51296"/>
        <dbReference type="Rhea" id="RHEA-COMP:12313"/>
        <dbReference type="Rhea" id="RHEA-COMP:12314"/>
        <dbReference type="ChEBI" id="CHEBI:15377"/>
        <dbReference type="ChEBI" id="CHEBI:16044"/>
        <dbReference type="ChEBI" id="CHEBI:24646"/>
        <dbReference type="ChEBI" id="CHEBI:45764"/>
        <dbReference type="ChEBI" id="CHEBI:132124"/>
    </reaction>
</comment>
<comment type="cofactor">
    <cofactor evidence="1">
        <name>Mo-molybdopterin</name>
        <dbReference type="ChEBI" id="CHEBI:71302"/>
    </cofactor>
    <text evidence="1">Binds 1 Mo-molybdopterin (Mo-MPT) cofactor per subunit.</text>
</comment>
<comment type="subunit">
    <text evidence="1">Heterodimer of a catalytic subunit (MsrP) and a heme-binding subunit (MsrQ).</text>
</comment>
<comment type="subcellular location">
    <subcellularLocation>
        <location evidence="1">Periplasm</location>
    </subcellularLocation>
    <text evidence="1">Is attached to the inner membrane when interacting with the MsrQ subunit.</text>
</comment>
<comment type="PTM">
    <text evidence="1">Predicted to be exported by the Tat system. The position of the signal peptide cleavage has not been experimentally proven.</text>
</comment>
<comment type="similarity">
    <text evidence="1">Belongs to the MsrP family.</text>
</comment>
<keyword id="KW-0479">Metal-binding</keyword>
<keyword id="KW-0500">Molybdenum</keyword>
<keyword id="KW-0560">Oxidoreductase</keyword>
<keyword id="KW-0574">Periplasm</keyword>
<keyword id="KW-0732">Signal</keyword>
<evidence type="ECO:0000255" key="1">
    <source>
        <dbReference type="HAMAP-Rule" id="MF_01206"/>
    </source>
</evidence>
<accession>Q5PJV7</accession>
<feature type="signal peptide" description="Tat-type signal" evidence="1">
    <location>
        <begin position="1"/>
        <end position="44"/>
    </location>
</feature>
<feature type="chain" id="PRO_1000066164" description="Protein-methionine-sulfoxide reductase catalytic subunit MsrP" evidence="1">
    <location>
        <begin position="45"/>
        <end position="334"/>
    </location>
</feature>
<feature type="binding site" evidence="1">
    <location>
        <position position="88"/>
    </location>
    <ligand>
        <name>Mo-molybdopterin</name>
        <dbReference type="ChEBI" id="CHEBI:71302"/>
    </ligand>
</feature>
<feature type="binding site" evidence="1">
    <location>
        <begin position="91"/>
        <end position="92"/>
    </location>
    <ligand>
        <name>Mo-molybdopterin</name>
        <dbReference type="ChEBI" id="CHEBI:71302"/>
    </ligand>
</feature>
<feature type="binding site" evidence="1">
    <location>
        <position position="146"/>
    </location>
    <ligand>
        <name>Mo-molybdopterin</name>
        <dbReference type="ChEBI" id="CHEBI:71302"/>
    </ligand>
    <ligandPart>
        <name>Mo</name>
        <dbReference type="ChEBI" id="CHEBI:28685"/>
    </ligandPart>
</feature>
<feature type="binding site" evidence="1">
    <location>
        <position position="181"/>
    </location>
    <ligand>
        <name>Mo-molybdopterin</name>
        <dbReference type="ChEBI" id="CHEBI:71302"/>
    </ligand>
</feature>
<feature type="binding site" evidence="1">
    <location>
        <position position="233"/>
    </location>
    <ligand>
        <name>Mo-molybdopterin</name>
        <dbReference type="ChEBI" id="CHEBI:71302"/>
    </ligand>
</feature>
<feature type="binding site" evidence="1">
    <location>
        <position position="238"/>
    </location>
    <ligand>
        <name>Mo-molybdopterin</name>
        <dbReference type="ChEBI" id="CHEBI:71302"/>
    </ligand>
</feature>
<feature type="binding site" evidence="1">
    <location>
        <begin position="249"/>
        <end position="251"/>
    </location>
    <ligand>
        <name>Mo-molybdopterin</name>
        <dbReference type="ChEBI" id="CHEBI:71302"/>
    </ligand>
</feature>
<dbReference type="EC" id="1.8.5.-" evidence="1"/>
<dbReference type="EMBL" id="CP000026">
    <property type="protein sequence ID" value="AAV79067.1"/>
    <property type="molecule type" value="Genomic_DNA"/>
</dbReference>
<dbReference type="RefSeq" id="WP_000723876.1">
    <property type="nucleotide sequence ID" value="NC_006511.1"/>
</dbReference>
<dbReference type="SMR" id="Q5PJV7"/>
<dbReference type="KEGG" id="spt:SPA3244"/>
<dbReference type="HOGENOM" id="CLU_045520_0_0_6"/>
<dbReference type="Proteomes" id="UP000008185">
    <property type="component" value="Chromosome"/>
</dbReference>
<dbReference type="GO" id="GO:0042597">
    <property type="term" value="C:periplasmic space"/>
    <property type="evidence" value="ECO:0007669"/>
    <property type="project" value="UniProtKB-SubCell"/>
</dbReference>
<dbReference type="GO" id="GO:0046872">
    <property type="term" value="F:metal ion binding"/>
    <property type="evidence" value="ECO:0007669"/>
    <property type="project" value="UniProtKB-KW"/>
</dbReference>
<dbReference type="GO" id="GO:0043546">
    <property type="term" value="F:molybdopterin cofactor binding"/>
    <property type="evidence" value="ECO:0007669"/>
    <property type="project" value="UniProtKB-UniRule"/>
</dbReference>
<dbReference type="GO" id="GO:0016672">
    <property type="term" value="F:oxidoreductase activity, acting on a sulfur group of donors, quinone or similar compound as acceptor"/>
    <property type="evidence" value="ECO:0007669"/>
    <property type="project" value="UniProtKB-UniRule"/>
</dbReference>
<dbReference type="GO" id="GO:0030091">
    <property type="term" value="P:protein repair"/>
    <property type="evidence" value="ECO:0007669"/>
    <property type="project" value="UniProtKB-UniRule"/>
</dbReference>
<dbReference type="CDD" id="cd02107">
    <property type="entry name" value="YedY_like_Moco"/>
    <property type="match status" value="1"/>
</dbReference>
<dbReference type="FunFam" id="3.90.420.10:FF:000001">
    <property type="entry name" value="Protein-methionine-sulfoxide reductase catalytic subunit MsrP"/>
    <property type="match status" value="1"/>
</dbReference>
<dbReference type="Gene3D" id="3.90.420.10">
    <property type="entry name" value="Oxidoreductase, molybdopterin-binding domain"/>
    <property type="match status" value="1"/>
</dbReference>
<dbReference type="HAMAP" id="MF_01206">
    <property type="entry name" value="MsrP"/>
    <property type="match status" value="1"/>
</dbReference>
<dbReference type="InterPro" id="IPR022867">
    <property type="entry name" value="MsrP"/>
</dbReference>
<dbReference type="InterPro" id="IPR000572">
    <property type="entry name" value="OxRdtase_Mopterin-bd_dom"/>
</dbReference>
<dbReference type="InterPro" id="IPR036374">
    <property type="entry name" value="OxRdtase_Mopterin-bd_sf"/>
</dbReference>
<dbReference type="InterPro" id="IPR006311">
    <property type="entry name" value="TAT_signal"/>
</dbReference>
<dbReference type="NCBIfam" id="NF003767">
    <property type="entry name" value="PRK05363.1"/>
    <property type="match status" value="1"/>
</dbReference>
<dbReference type="PANTHER" id="PTHR43032">
    <property type="entry name" value="PROTEIN-METHIONINE-SULFOXIDE REDUCTASE"/>
    <property type="match status" value="1"/>
</dbReference>
<dbReference type="PANTHER" id="PTHR43032:SF3">
    <property type="entry name" value="PROTEIN-METHIONINE-SULFOXIDE REDUCTASE CATALYTIC SUBUNIT MSRP"/>
    <property type="match status" value="1"/>
</dbReference>
<dbReference type="Pfam" id="PF00174">
    <property type="entry name" value="Oxidored_molyb"/>
    <property type="match status" value="1"/>
</dbReference>
<dbReference type="SUPFAM" id="SSF56524">
    <property type="entry name" value="Oxidoreductase molybdopterin-binding domain"/>
    <property type="match status" value="1"/>
</dbReference>
<dbReference type="PROSITE" id="PS51318">
    <property type="entry name" value="TAT"/>
    <property type="match status" value="1"/>
</dbReference>
<name>MSRP_SALPA</name>
<reference key="1">
    <citation type="journal article" date="2004" name="Nat. Genet.">
        <title>Comparison of genome degradation in Paratyphi A and Typhi, human-restricted serovars of Salmonella enterica that cause typhoid.</title>
        <authorList>
            <person name="McClelland M."/>
            <person name="Sanderson K.E."/>
            <person name="Clifton S.W."/>
            <person name="Latreille P."/>
            <person name="Porwollik S."/>
            <person name="Sabo A."/>
            <person name="Meyer R."/>
            <person name="Bieri T."/>
            <person name="Ozersky P."/>
            <person name="McLellan M."/>
            <person name="Harkins C.R."/>
            <person name="Wang C."/>
            <person name="Nguyen C."/>
            <person name="Berghoff A."/>
            <person name="Elliott G."/>
            <person name="Kohlberg S."/>
            <person name="Strong C."/>
            <person name="Du F."/>
            <person name="Carter J."/>
            <person name="Kremizki C."/>
            <person name="Layman D."/>
            <person name="Leonard S."/>
            <person name="Sun H."/>
            <person name="Fulton L."/>
            <person name="Nash W."/>
            <person name="Miner T."/>
            <person name="Minx P."/>
            <person name="Delehaunty K."/>
            <person name="Fronick C."/>
            <person name="Magrini V."/>
            <person name="Nhan M."/>
            <person name="Warren W."/>
            <person name="Florea L."/>
            <person name="Spieth J."/>
            <person name="Wilson R.K."/>
        </authorList>
    </citation>
    <scope>NUCLEOTIDE SEQUENCE [LARGE SCALE GENOMIC DNA]</scope>
    <source>
        <strain>ATCC 9150 / SARB42</strain>
    </source>
</reference>
<organism>
    <name type="scientific">Salmonella paratyphi A (strain ATCC 9150 / SARB42)</name>
    <dbReference type="NCBI Taxonomy" id="295319"/>
    <lineage>
        <taxon>Bacteria</taxon>
        <taxon>Pseudomonadati</taxon>
        <taxon>Pseudomonadota</taxon>
        <taxon>Gammaproteobacteria</taxon>
        <taxon>Enterobacterales</taxon>
        <taxon>Enterobacteriaceae</taxon>
        <taxon>Salmonella</taxon>
    </lineage>
</organism>
<gene>
    <name evidence="1" type="primary">msrP</name>
    <name type="ordered locus">SPA3244</name>
</gene>
<proteinExistence type="inferred from homology"/>
<protein>
    <recommendedName>
        <fullName evidence="1">Protein-methionine-sulfoxide reductase catalytic subunit MsrP</fullName>
        <ecNumber evidence="1">1.8.5.-</ecNumber>
    </recommendedName>
</protein>
<sequence>MKKIRPLTEADVTAESAFFMQRRQVLKALGISAAALSLPSTAQADLFSWFKGNDRPKAPAGKPLEFSQPAAWRSDLALTPEDKVTGYNNFYEFGLDKADPAANAGSLKTEPWTLKISGEVAKPFTLDYDDLTHRFPLEERIYRMRCVEAWSMVVPWIGFPLYKLLAQAQPTSHAKYVAFETLYAPDDMPGQKDRFIGGGLKYPYVEGLRLDEAMHPLTLMTVGVYGKALPPQNGAPIRLIVPWKYGFKGIKSIVSIKLTRERPPTTWNLSAPNEYGFYANVNPHVDHPRWSQATERFIGSGGILDVQRQPTLLFNGYANEVASLYRGLNLRENF</sequence>